<organism>
    <name type="scientific">Listeria monocytogenes serotype 4a (strain HCC23)</name>
    <dbReference type="NCBI Taxonomy" id="552536"/>
    <lineage>
        <taxon>Bacteria</taxon>
        <taxon>Bacillati</taxon>
        <taxon>Bacillota</taxon>
        <taxon>Bacilli</taxon>
        <taxon>Bacillales</taxon>
        <taxon>Listeriaceae</taxon>
        <taxon>Listeria</taxon>
    </lineage>
</organism>
<accession>B8DA91</accession>
<protein>
    <recommendedName>
        <fullName evidence="1">UPF0210 protein LMHCC_2097</fullName>
    </recommendedName>
</protein>
<comment type="subunit">
    <text evidence="1">Homodimer.</text>
</comment>
<comment type="similarity">
    <text evidence="1">Belongs to the UPF0210 family.</text>
</comment>
<evidence type="ECO:0000255" key="1">
    <source>
        <dbReference type="HAMAP-Rule" id="MF_01221"/>
    </source>
</evidence>
<feature type="chain" id="PRO_1000164866" description="UPF0210 protein LMHCC_2097">
    <location>
        <begin position="1"/>
        <end position="451"/>
    </location>
</feature>
<dbReference type="EMBL" id="CP001175">
    <property type="protein sequence ID" value="ACK40436.1"/>
    <property type="molecule type" value="Genomic_DNA"/>
</dbReference>
<dbReference type="RefSeq" id="WP_012581872.1">
    <property type="nucleotide sequence ID" value="NC_011660.1"/>
</dbReference>
<dbReference type="SMR" id="B8DA91"/>
<dbReference type="KEGG" id="lmh:LMHCC_2097"/>
<dbReference type="HOGENOM" id="CLU_048704_0_0_9"/>
<dbReference type="CDD" id="cd08025">
    <property type="entry name" value="RNR_PFL_like_DUF711"/>
    <property type="match status" value="1"/>
</dbReference>
<dbReference type="Gene3D" id="3.20.70.20">
    <property type="match status" value="1"/>
</dbReference>
<dbReference type="HAMAP" id="MF_01221">
    <property type="entry name" value="UPF0210"/>
    <property type="match status" value="1"/>
</dbReference>
<dbReference type="InterPro" id="IPR007841">
    <property type="entry name" value="UPF0210"/>
</dbReference>
<dbReference type="NCBIfam" id="NF003700">
    <property type="entry name" value="PRK05313.1"/>
    <property type="match status" value="1"/>
</dbReference>
<dbReference type="PANTHER" id="PTHR37560:SF1">
    <property type="entry name" value="UPF0210 PROTEIN MJ1665"/>
    <property type="match status" value="1"/>
</dbReference>
<dbReference type="PANTHER" id="PTHR37560">
    <property type="entry name" value="UPF0210 PROTEIN SPR0218"/>
    <property type="match status" value="1"/>
</dbReference>
<dbReference type="Pfam" id="PF05167">
    <property type="entry name" value="DUF711"/>
    <property type="match status" value="1"/>
</dbReference>
<dbReference type="SUPFAM" id="SSF51998">
    <property type="entry name" value="PFL-like glycyl radical enzymes"/>
    <property type="match status" value="1"/>
</dbReference>
<gene>
    <name type="ordered locus">LMHCC_2097</name>
</gene>
<name>Y2097_LISMH</name>
<proteinExistence type="inferred from homology"/>
<reference key="1">
    <citation type="journal article" date="2011" name="J. Bacteriol.">
        <title>Genome sequence of lineage III Listeria monocytogenes strain HCC23.</title>
        <authorList>
            <person name="Steele C.L."/>
            <person name="Donaldson J.R."/>
            <person name="Paul D."/>
            <person name="Banes M.M."/>
            <person name="Arick T."/>
            <person name="Bridges S.M."/>
            <person name="Lawrence M.L."/>
        </authorList>
    </citation>
    <scope>NUCLEOTIDE SEQUENCE [LARGE SCALE GENOMIC DNA]</scope>
    <source>
        <strain>HCC23</strain>
    </source>
</reference>
<sequence>METNQILETIRMIEEEKLDIRTITMGISLLDCMDGDGEVARKKIYQKIVTKARNLVAVGEAIESEFGIPIINKRISVTPIAIIAGSSADTDYVGFAKTLDAAAKEVGVNFIGGYSALVQKGYTKGDEILIRSIPQALAQTERVCSSVNVGSTRTGINMDAVRQMGEVIKETADLTADTQGLGCAKLVVFANAVEDNPFMAGAFHGVGEADCVINVGVSGPGVVKRAIEKVKGEPFDIVAETVKQTAFKITRMGQLVGQVASEKLGVPFGIVDLSLAPTPAIGDSVAHILEEMGLEMVGTHGTTAALALLNDAVKKGGVMACGHVGGLSGAFIPVSEDAGMIEAVQQGALNLEKLEAMTAICSVGLDMIAVPGDTTAETLAAMIADEAAIGVINNKTTAVRVIPASGTKVGDMVEFGGLLGTAPVMPVNGKSSVDFIARGGRIPAPIHSFKN</sequence>